<organism>
    <name type="scientific">Methanococcus maripaludis (strain DSM 14266 / JCM 13030 / NBRC 101832 / S2 / LL)</name>
    <dbReference type="NCBI Taxonomy" id="267377"/>
    <lineage>
        <taxon>Archaea</taxon>
        <taxon>Methanobacteriati</taxon>
        <taxon>Methanobacteriota</taxon>
        <taxon>Methanomada group</taxon>
        <taxon>Methanococci</taxon>
        <taxon>Methanococcales</taxon>
        <taxon>Methanococcaceae</taxon>
        <taxon>Methanococcus</taxon>
    </lineage>
</organism>
<gene>
    <name evidence="1" type="primary">rpl15e</name>
    <name type="ordered locus">MMP0298</name>
</gene>
<reference key="1">
    <citation type="journal article" date="2004" name="J. Bacteriol.">
        <title>Complete genome sequence of the genetically tractable hydrogenotrophic methanogen Methanococcus maripaludis.</title>
        <authorList>
            <person name="Hendrickson E.L."/>
            <person name="Kaul R."/>
            <person name="Zhou Y."/>
            <person name="Bovee D."/>
            <person name="Chapman P."/>
            <person name="Chung J."/>
            <person name="Conway de Macario E."/>
            <person name="Dodsworth J.A."/>
            <person name="Gillett W."/>
            <person name="Graham D.E."/>
            <person name="Hackett M."/>
            <person name="Haydock A.K."/>
            <person name="Kang A."/>
            <person name="Land M.L."/>
            <person name="Levy R."/>
            <person name="Lie T.J."/>
            <person name="Major T.A."/>
            <person name="Moore B.C."/>
            <person name="Porat I."/>
            <person name="Palmeiri A."/>
            <person name="Rouse G."/>
            <person name="Saenphimmachak C."/>
            <person name="Soell D."/>
            <person name="Van Dien S."/>
            <person name="Wang T."/>
            <person name="Whitman W.B."/>
            <person name="Xia Q."/>
            <person name="Zhang Y."/>
            <person name="Larimer F.W."/>
            <person name="Olson M.V."/>
            <person name="Leigh J.A."/>
        </authorList>
    </citation>
    <scope>NUCLEOTIDE SEQUENCE [LARGE SCALE GENOMIC DNA]</scope>
    <source>
        <strain>DSM 14266 / JCM 13030 / NBRC 101832 / S2 / LL</strain>
    </source>
</reference>
<name>RL15E_METMP</name>
<feature type="chain" id="PRO_0000127576" description="Large ribosomal subunit protein eL15">
    <location>
        <begin position="1"/>
        <end position="194"/>
    </location>
</feature>
<feature type="region of interest" description="Disordered" evidence="2">
    <location>
        <begin position="158"/>
        <end position="194"/>
    </location>
</feature>
<evidence type="ECO:0000255" key="1">
    <source>
        <dbReference type="HAMAP-Rule" id="MF_00256"/>
    </source>
</evidence>
<evidence type="ECO:0000256" key="2">
    <source>
        <dbReference type="SAM" id="MobiDB-lite"/>
    </source>
</evidence>
<evidence type="ECO:0000305" key="3"/>
<accession>P61370</accession>
<protein>
    <recommendedName>
        <fullName evidence="1">Large ribosomal subunit protein eL15</fullName>
    </recommendedName>
    <alternativeName>
        <fullName evidence="3">50S ribosomal protein L15e</fullName>
    </alternativeName>
</protein>
<proteinExistence type="inferred from homology"/>
<comment type="similarity">
    <text evidence="1">Belongs to the eukaryotic ribosomal protein eL15 family.</text>
</comment>
<sequence length="194" mass="22220">MSMYNYVKEAWKVPANSYVKELQWARMQDWRKEPSVLRIERPTRIDRARNLGYKAKQGIVVVRVSVRRGGLRKPRPKHSKKPATLGINKITMAKSIQRIAEERAAKRYPNMEVLNSYWVGQDGKQKWYEIILVDPCHPSIKNDKSYSWLSTGNHKGRANRGLTSAGKKGRGLMYKGKGAEKARPGVRANGKKTK</sequence>
<keyword id="KW-1185">Reference proteome</keyword>
<keyword id="KW-0687">Ribonucleoprotein</keyword>
<keyword id="KW-0689">Ribosomal protein</keyword>
<dbReference type="EMBL" id="BX950229">
    <property type="protein sequence ID" value="CAF29854.1"/>
    <property type="molecule type" value="Genomic_DNA"/>
</dbReference>
<dbReference type="RefSeq" id="WP_011170242.1">
    <property type="nucleotide sequence ID" value="NC_005791.1"/>
</dbReference>
<dbReference type="SMR" id="P61370"/>
<dbReference type="STRING" id="267377.MMP0298"/>
<dbReference type="EnsemblBacteria" id="CAF29854">
    <property type="protein sequence ID" value="CAF29854"/>
    <property type="gene ID" value="MMP0298"/>
</dbReference>
<dbReference type="KEGG" id="mmp:MMP0298"/>
<dbReference type="PATRIC" id="fig|267377.15.peg.301"/>
<dbReference type="eggNOG" id="arCOG04209">
    <property type="taxonomic scope" value="Archaea"/>
</dbReference>
<dbReference type="HOGENOM" id="CLU_080796_0_0_2"/>
<dbReference type="OrthoDB" id="8183at2157"/>
<dbReference type="Proteomes" id="UP000000590">
    <property type="component" value="Chromosome"/>
</dbReference>
<dbReference type="GO" id="GO:0022625">
    <property type="term" value="C:cytosolic large ribosomal subunit"/>
    <property type="evidence" value="ECO:0007669"/>
    <property type="project" value="TreeGrafter"/>
</dbReference>
<dbReference type="GO" id="GO:0003723">
    <property type="term" value="F:RNA binding"/>
    <property type="evidence" value="ECO:0007669"/>
    <property type="project" value="TreeGrafter"/>
</dbReference>
<dbReference type="GO" id="GO:0003735">
    <property type="term" value="F:structural constituent of ribosome"/>
    <property type="evidence" value="ECO:0007669"/>
    <property type="project" value="InterPro"/>
</dbReference>
<dbReference type="GO" id="GO:0002181">
    <property type="term" value="P:cytoplasmic translation"/>
    <property type="evidence" value="ECO:0007669"/>
    <property type="project" value="TreeGrafter"/>
</dbReference>
<dbReference type="FunFam" id="3.40.1120.10:FF:000002">
    <property type="entry name" value="50S ribosomal protein L15e"/>
    <property type="match status" value="1"/>
</dbReference>
<dbReference type="Gene3D" id="3.40.1120.10">
    <property type="entry name" value="Ribosomal protein l15e"/>
    <property type="match status" value="1"/>
</dbReference>
<dbReference type="HAMAP" id="MF_00256">
    <property type="entry name" value="Ribosomal_eL15"/>
    <property type="match status" value="1"/>
</dbReference>
<dbReference type="InterPro" id="IPR024794">
    <property type="entry name" value="Rbsml_eL15_core_dom_sf"/>
</dbReference>
<dbReference type="InterPro" id="IPR000439">
    <property type="entry name" value="Ribosomal_eL15"/>
</dbReference>
<dbReference type="InterPro" id="IPR020926">
    <property type="entry name" value="Ribosomal_eL15_arc"/>
</dbReference>
<dbReference type="InterPro" id="IPR020925">
    <property type="entry name" value="Ribosomal_eL15_CS"/>
</dbReference>
<dbReference type="InterPro" id="IPR012678">
    <property type="entry name" value="Ribosomal_uL23/eL15/eS24_sf"/>
</dbReference>
<dbReference type="NCBIfam" id="NF003269">
    <property type="entry name" value="PRK04243.1"/>
    <property type="match status" value="1"/>
</dbReference>
<dbReference type="PANTHER" id="PTHR11847:SF4">
    <property type="entry name" value="LARGE RIBOSOMAL SUBUNIT PROTEIN EL15"/>
    <property type="match status" value="1"/>
</dbReference>
<dbReference type="PANTHER" id="PTHR11847">
    <property type="entry name" value="RIBOSOMAL PROTEIN L15"/>
    <property type="match status" value="1"/>
</dbReference>
<dbReference type="Pfam" id="PF00827">
    <property type="entry name" value="Ribosomal_L15e"/>
    <property type="match status" value="1"/>
</dbReference>
<dbReference type="SMART" id="SM01384">
    <property type="entry name" value="Ribosomal_L15e"/>
    <property type="match status" value="1"/>
</dbReference>
<dbReference type="SUPFAM" id="SSF54189">
    <property type="entry name" value="Ribosomal proteins S24e, L23 and L15e"/>
    <property type="match status" value="1"/>
</dbReference>
<dbReference type="PROSITE" id="PS01194">
    <property type="entry name" value="RIBOSOMAL_L15E"/>
    <property type="match status" value="1"/>
</dbReference>